<keyword id="KW-0028">Amino-acid biosynthesis</keyword>
<keyword id="KW-0055">Arginine biosynthesis</keyword>
<keyword id="KW-0963">Cytoplasm</keyword>
<keyword id="KW-0521">NADP</keyword>
<keyword id="KW-0560">Oxidoreductase</keyword>
<keyword id="KW-1185">Reference proteome</keyword>
<feature type="chain" id="PRO_0000112414" description="N-acetyl-gamma-glutamyl-phosphate reductase">
    <location>
        <begin position="1"/>
        <end position="347"/>
    </location>
</feature>
<feature type="active site" evidence="1">
    <location>
        <position position="150"/>
    </location>
</feature>
<reference key="1">
    <citation type="journal article" date="2004" name="Mol. Plant Microbe Interact.">
        <title>The genome sequence of the Gram-positive sugarcane pathogen Leifsonia xyli subsp. xyli.</title>
        <authorList>
            <person name="Monteiro-Vitorello C.B."/>
            <person name="Camargo L.E.A."/>
            <person name="Van Sluys M.A."/>
            <person name="Kitajima J.P."/>
            <person name="Truffi D."/>
            <person name="do Amaral A.M."/>
            <person name="Harakava R."/>
            <person name="de Oliveira J.C.F."/>
            <person name="Wood D."/>
            <person name="de Oliveira M.C."/>
            <person name="Miyaki C.Y."/>
            <person name="Takita M.A."/>
            <person name="da Silva A.C.R."/>
            <person name="Furlan L.R."/>
            <person name="Carraro D.M."/>
            <person name="Camarotte G."/>
            <person name="Almeida N.F. Jr."/>
            <person name="Carrer H."/>
            <person name="Coutinho L.L."/>
            <person name="El-Dorry H.A."/>
            <person name="Ferro M.I.T."/>
            <person name="Gagliardi P.R."/>
            <person name="Giglioti E."/>
            <person name="Goldman M.H.S."/>
            <person name="Goldman G.H."/>
            <person name="Kimura E.T."/>
            <person name="Ferro E.S."/>
            <person name="Kuramae E.E."/>
            <person name="Lemos E.G.M."/>
            <person name="Lemos M.V.F."/>
            <person name="Mauro S.M.Z."/>
            <person name="Machado M.A."/>
            <person name="Marino C.L."/>
            <person name="Menck C.F."/>
            <person name="Nunes L.R."/>
            <person name="Oliveira R.C."/>
            <person name="Pereira G.G."/>
            <person name="Siqueira W."/>
            <person name="de Souza A.A."/>
            <person name="Tsai S.M."/>
            <person name="Zanca A.S."/>
            <person name="Simpson A.J.G."/>
            <person name="Brumbley S.M."/>
            <person name="Setubal J.C."/>
        </authorList>
    </citation>
    <scope>NUCLEOTIDE SEQUENCE [LARGE SCALE GENOMIC DNA]</scope>
    <source>
        <strain>CTCB07</strain>
    </source>
</reference>
<name>ARGC_LEIXX</name>
<evidence type="ECO:0000255" key="1">
    <source>
        <dbReference type="HAMAP-Rule" id="MF_00150"/>
    </source>
</evidence>
<proteinExistence type="inferred from homology"/>
<gene>
    <name evidence="1" type="primary">argC</name>
    <name type="ordered locus">Lxx06030</name>
</gene>
<protein>
    <recommendedName>
        <fullName evidence="1">N-acetyl-gamma-glutamyl-phosphate reductase</fullName>
        <shortName evidence="1">AGPR</shortName>
        <ecNumber evidence="1">1.2.1.38</ecNumber>
    </recommendedName>
    <alternativeName>
        <fullName evidence="1">N-acetyl-glutamate semialdehyde dehydrogenase</fullName>
        <shortName evidence="1">NAGSA dehydrogenase</shortName>
    </alternativeName>
</protein>
<dbReference type="EC" id="1.2.1.38" evidence="1"/>
<dbReference type="EMBL" id="AE016822">
    <property type="protein sequence ID" value="AAT88562.1"/>
    <property type="molecule type" value="Genomic_DNA"/>
</dbReference>
<dbReference type="RefSeq" id="WP_011185561.1">
    <property type="nucleotide sequence ID" value="NC_006087.1"/>
</dbReference>
<dbReference type="SMR" id="Q6AGD3"/>
<dbReference type="STRING" id="281090.Lxx06030"/>
<dbReference type="KEGG" id="lxx:Lxx06030"/>
<dbReference type="eggNOG" id="COG0002">
    <property type="taxonomic scope" value="Bacteria"/>
</dbReference>
<dbReference type="HOGENOM" id="CLU_006384_0_0_11"/>
<dbReference type="UniPathway" id="UPA00068">
    <property type="reaction ID" value="UER00108"/>
</dbReference>
<dbReference type="Proteomes" id="UP000001306">
    <property type="component" value="Chromosome"/>
</dbReference>
<dbReference type="GO" id="GO:0005737">
    <property type="term" value="C:cytoplasm"/>
    <property type="evidence" value="ECO:0007669"/>
    <property type="project" value="UniProtKB-SubCell"/>
</dbReference>
<dbReference type="GO" id="GO:0003942">
    <property type="term" value="F:N-acetyl-gamma-glutamyl-phosphate reductase activity"/>
    <property type="evidence" value="ECO:0007669"/>
    <property type="project" value="UniProtKB-UniRule"/>
</dbReference>
<dbReference type="GO" id="GO:0051287">
    <property type="term" value="F:NAD binding"/>
    <property type="evidence" value="ECO:0007669"/>
    <property type="project" value="InterPro"/>
</dbReference>
<dbReference type="GO" id="GO:0070401">
    <property type="term" value="F:NADP+ binding"/>
    <property type="evidence" value="ECO:0007669"/>
    <property type="project" value="InterPro"/>
</dbReference>
<dbReference type="GO" id="GO:0006526">
    <property type="term" value="P:L-arginine biosynthetic process"/>
    <property type="evidence" value="ECO:0007669"/>
    <property type="project" value="UniProtKB-UniRule"/>
</dbReference>
<dbReference type="CDD" id="cd24148">
    <property type="entry name" value="AGPR_1_actinobacAGPR_like"/>
    <property type="match status" value="1"/>
</dbReference>
<dbReference type="CDD" id="cd23934">
    <property type="entry name" value="AGPR_1_C"/>
    <property type="match status" value="1"/>
</dbReference>
<dbReference type="Gene3D" id="3.30.360.10">
    <property type="entry name" value="Dihydrodipicolinate Reductase, domain 2"/>
    <property type="match status" value="1"/>
</dbReference>
<dbReference type="Gene3D" id="3.40.50.720">
    <property type="entry name" value="NAD(P)-binding Rossmann-like Domain"/>
    <property type="match status" value="1"/>
</dbReference>
<dbReference type="HAMAP" id="MF_00150">
    <property type="entry name" value="ArgC_type1"/>
    <property type="match status" value="1"/>
</dbReference>
<dbReference type="InterPro" id="IPR000706">
    <property type="entry name" value="AGPR_type-1"/>
</dbReference>
<dbReference type="InterPro" id="IPR036291">
    <property type="entry name" value="NAD(P)-bd_dom_sf"/>
</dbReference>
<dbReference type="InterPro" id="IPR050085">
    <property type="entry name" value="NAGSA_dehydrogenase"/>
</dbReference>
<dbReference type="InterPro" id="IPR000534">
    <property type="entry name" value="Semialdehyde_DH_NAD-bd"/>
</dbReference>
<dbReference type="NCBIfam" id="TIGR01850">
    <property type="entry name" value="argC"/>
    <property type="match status" value="1"/>
</dbReference>
<dbReference type="PANTHER" id="PTHR32338:SF10">
    <property type="entry name" value="N-ACETYL-GAMMA-GLUTAMYL-PHOSPHATE REDUCTASE, CHLOROPLASTIC-RELATED"/>
    <property type="match status" value="1"/>
</dbReference>
<dbReference type="PANTHER" id="PTHR32338">
    <property type="entry name" value="N-ACETYL-GAMMA-GLUTAMYL-PHOSPHATE REDUCTASE, CHLOROPLASTIC-RELATED-RELATED"/>
    <property type="match status" value="1"/>
</dbReference>
<dbReference type="Pfam" id="PF01118">
    <property type="entry name" value="Semialdhyde_dh"/>
    <property type="match status" value="1"/>
</dbReference>
<dbReference type="Pfam" id="PF22698">
    <property type="entry name" value="Semialdhyde_dhC_1"/>
    <property type="match status" value="1"/>
</dbReference>
<dbReference type="SMART" id="SM00859">
    <property type="entry name" value="Semialdhyde_dh"/>
    <property type="match status" value="1"/>
</dbReference>
<dbReference type="SUPFAM" id="SSF55347">
    <property type="entry name" value="Glyceraldehyde-3-phosphate dehydrogenase-like, C-terminal domain"/>
    <property type="match status" value="1"/>
</dbReference>
<dbReference type="SUPFAM" id="SSF51735">
    <property type="entry name" value="NAD(P)-binding Rossmann-fold domains"/>
    <property type="match status" value="1"/>
</dbReference>
<sequence>MTFSVAVAGASGYAGGELLRILADHPDFDIRTVTAHQNAGQPLAAHQPHLRSLAGLTLSESTAENLAGHDVVFLALPHGKSGEIATQLPADTLVVDCGADHRLEDPDAWAAFYGGEHFGSWAYGVPELPVGAGRQRERLAGAKRIAAPGCNASAVSLALAPGIHAGLIEDADIVSVLAVGPSGAGKALKTMYLASEILGSANPYAVGGTHRHIPEIQQSLRKAGALSPTISFIPVLVPMSRGILATSTARVKPGVSAAQVQAAWEETYAGEPFVQVLPAGSVPRTSDVLGANTALIGVALDAAAGRVVAVLAIDNLYKGTAGAAIQSANIALGLAETAGLSVNGVAP</sequence>
<comment type="function">
    <text evidence="1">Catalyzes the NADPH-dependent reduction of N-acetyl-5-glutamyl phosphate to yield N-acetyl-L-glutamate 5-semialdehyde.</text>
</comment>
<comment type="catalytic activity">
    <reaction evidence="1">
        <text>N-acetyl-L-glutamate 5-semialdehyde + phosphate + NADP(+) = N-acetyl-L-glutamyl 5-phosphate + NADPH + H(+)</text>
        <dbReference type="Rhea" id="RHEA:21588"/>
        <dbReference type="ChEBI" id="CHEBI:15378"/>
        <dbReference type="ChEBI" id="CHEBI:29123"/>
        <dbReference type="ChEBI" id="CHEBI:43474"/>
        <dbReference type="ChEBI" id="CHEBI:57783"/>
        <dbReference type="ChEBI" id="CHEBI:57936"/>
        <dbReference type="ChEBI" id="CHEBI:58349"/>
        <dbReference type="EC" id="1.2.1.38"/>
    </reaction>
</comment>
<comment type="pathway">
    <text evidence="1">Amino-acid biosynthesis; L-arginine biosynthesis; N(2)-acetyl-L-ornithine from L-glutamate: step 3/4.</text>
</comment>
<comment type="subcellular location">
    <subcellularLocation>
        <location evidence="1">Cytoplasm</location>
    </subcellularLocation>
</comment>
<comment type="similarity">
    <text evidence="1">Belongs to the NAGSA dehydrogenase family. Type 1 subfamily.</text>
</comment>
<accession>Q6AGD3</accession>
<organism>
    <name type="scientific">Leifsonia xyli subsp. xyli (strain CTCB07)</name>
    <dbReference type="NCBI Taxonomy" id="281090"/>
    <lineage>
        <taxon>Bacteria</taxon>
        <taxon>Bacillati</taxon>
        <taxon>Actinomycetota</taxon>
        <taxon>Actinomycetes</taxon>
        <taxon>Micrococcales</taxon>
        <taxon>Microbacteriaceae</taxon>
        <taxon>Leifsonia</taxon>
    </lineage>
</organism>